<evidence type="ECO:0000255" key="1">
    <source>
        <dbReference type="HAMAP-Rule" id="MF_01859"/>
    </source>
</evidence>
<reference key="1">
    <citation type="submission" date="2008-05" db="EMBL/GenBank/DDBJ databases">
        <title>Complete sequence of Shigella boydii serotype 18 strain BS512.</title>
        <authorList>
            <person name="Rasko D.A."/>
            <person name="Rosovitz M."/>
            <person name="Maurelli A.T."/>
            <person name="Myers G."/>
            <person name="Seshadri R."/>
            <person name="Cer R."/>
            <person name="Jiang L."/>
            <person name="Ravel J."/>
            <person name="Sebastian Y."/>
        </authorList>
    </citation>
    <scope>NUCLEOTIDE SEQUENCE [LARGE SCALE GENOMIC DNA]</scope>
    <source>
        <strain>CDC 3083-94 / BS512</strain>
    </source>
</reference>
<dbReference type="EC" id="2.1.1.174" evidence="1"/>
<dbReference type="EMBL" id="CP001063">
    <property type="protein sequence ID" value="ACD08898.1"/>
    <property type="molecule type" value="Genomic_DNA"/>
</dbReference>
<dbReference type="RefSeq" id="WP_000018686.1">
    <property type="nucleotide sequence ID" value="NC_010658.1"/>
</dbReference>
<dbReference type="SMR" id="B2U1T3"/>
<dbReference type="STRING" id="344609.SbBS512_E3520"/>
<dbReference type="KEGG" id="sbc:SbBS512_E3520"/>
<dbReference type="HOGENOM" id="CLU_040288_4_0_6"/>
<dbReference type="Proteomes" id="UP000001030">
    <property type="component" value="Chromosome"/>
</dbReference>
<dbReference type="GO" id="GO:0005737">
    <property type="term" value="C:cytoplasm"/>
    <property type="evidence" value="ECO:0007669"/>
    <property type="project" value="UniProtKB-SubCell"/>
</dbReference>
<dbReference type="GO" id="GO:0052916">
    <property type="term" value="F:23S rRNA (guanine(1835)-N(2))-methyltransferase activity"/>
    <property type="evidence" value="ECO:0007669"/>
    <property type="project" value="UniProtKB-EC"/>
</dbReference>
<dbReference type="GO" id="GO:0003676">
    <property type="term" value="F:nucleic acid binding"/>
    <property type="evidence" value="ECO:0007669"/>
    <property type="project" value="InterPro"/>
</dbReference>
<dbReference type="CDD" id="cd02440">
    <property type="entry name" value="AdoMet_MTases"/>
    <property type="match status" value="1"/>
</dbReference>
<dbReference type="FunFam" id="3.40.50.150:FF:000046">
    <property type="entry name" value="Ribosomal RNA large subunit methyltransferase G"/>
    <property type="match status" value="1"/>
</dbReference>
<dbReference type="FunFam" id="3.40.50.150:FF:000047">
    <property type="entry name" value="Ribosomal RNA large subunit methyltransferase G"/>
    <property type="match status" value="1"/>
</dbReference>
<dbReference type="Gene3D" id="3.40.50.150">
    <property type="entry name" value="Vaccinia Virus protein VP39"/>
    <property type="match status" value="2"/>
</dbReference>
<dbReference type="HAMAP" id="MF_01859">
    <property type="entry name" value="23SrRNA_methyltr_G"/>
    <property type="match status" value="1"/>
</dbReference>
<dbReference type="InterPro" id="IPR002052">
    <property type="entry name" value="DNA_methylase_N6_adenine_CS"/>
</dbReference>
<dbReference type="InterPro" id="IPR017237">
    <property type="entry name" value="rRNA_m2G-MeTrfase_RlmG"/>
</dbReference>
<dbReference type="InterPro" id="IPR046977">
    <property type="entry name" value="RsmC/RlmG"/>
</dbReference>
<dbReference type="InterPro" id="IPR029063">
    <property type="entry name" value="SAM-dependent_MTases_sf"/>
</dbReference>
<dbReference type="InterPro" id="IPR007848">
    <property type="entry name" value="Small_mtfrase_dom"/>
</dbReference>
<dbReference type="NCBIfam" id="NF011577">
    <property type="entry name" value="PRK15001.1"/>
    <property type="match status" value="1"/>
</dbReference>
<dbReference type="PANTHER" id="PTHR47816:SF5">
    <property type="entry name" value="RIBOSOMAL RNA LARGE SUBUNIT METHYLTRANSFERASE G"/>
    <property type="match status" value="1"/>
</dbReference>
<dbReference type="PANTHER" id="PTHR47816">
    <property type="entry name" value="RIBOSOMAL RNA SMALL SUBUNIT METHYLTRANSFERASE C"/>
    <property type="match status" value="1"/>
</dbReference>
<dbReference type="Pfam" id="PF05175">
    <property type="entry name" value="MTS"/>
    <property type="match status" value="1"/>
</dbReference>
<dbReference type="PIRSF" id="PIRSF037565">
    <property type="entry name" value="RRNA_m2G_Mtase_RsmD_prd"/>
    <property type="match status" value="1"/>
</dbReference>
<dbReference type="SUPFAM" id="SSF53335">
    <property type="entry name" value="S-adenosyl-L-methionine-dependent methyltransferases"/>
    <property type="match status" value="1"/>
</dbReference>
<feature type="chain" id="PRO_0000366521" description="Ribosomal RNA large subunit methyltransferase G">
    <location>
        <begin position="1"/>
        <end position="378"/>
    </location>
</feature>
<keyword id="KW-0963">Cytoplasm</keyword>
<keyword id="KW-0489">Methyltransferase</keyword>
<keyword id="KW-1185">Reference proteome</keyword>
<keyword id="KW-0698">rRNA processing</keyword>
<keyword id="KW-0949">S-adenosyl-L-methionine</keyword>
<keyword id="KW-0808">Transferase</keyword>
<gene>
    <name evidence="1" type="primary">rlmG</name>
    <name type="ordered locus">SbBS512_E3520</name>
</gene>
<organism>
    <name type="scientific">Shigella boydii serotype 18 (strain CDC 3083-94 / BS512)</name>
    <dbReference type="NCBI Taxonomy" id="344609"/>
    <lineage>
        <taxon>Bacteria</taxon>
        <taxon>Pseudomonadati</taxon>
        <taxon>Pseudomonadota</taxon>
        <taxon>Gammaproteobacteria</taxon>
        <taxon>Enterobacterales</taxon>
        <taxon>Enterobacteriaceae</taxon>
        <taxon>Shigella</taxon>
    </lineage>
</organism>
<protein>
    <recommendedName>
        <fullName evidence="1">Ribosomal RNA large subunit methyltransferase G</fullName>
        <ecNumber evidence="1">2.1.1.174</ecNumber>
    </recommendedName>
    <alternativeName>
        <fullName evidence="1">23S rRNA m2G1835 methyltransferase</fullName>
    </alternativeName>
    <alternativeName>
        <fullName evidence="1">rRNA (guanine-N(2)-)-methyltransferase RlmG</fullName>
    </alternativeName>
</protein>
<sequence length="378" mass="42314">MSHLDNGFRSLTLQRFPATDDVNPLQAWEAADEYLLQQLDDTEIRGPVLILNDAFGALSCALAEHKPYSIGDSYISELATRENLRLNGIDESSVKFLDSTADYPQQPGVVLIKVPKTLALLEQQLRALRKVVTSDTRIIAGAKARDIHTSTLELFEKVLGPTTTTLAWKKARLINCTFNEPPLADAPQTVSWKLEGTDWTIHNHANVFSRTGLDIGARFFMQHLPENLEGEIVDLGCGNGVIGLTLLDKNPQAKVVFVDESPMAVASSRLNVETNMPEALDRSEFMINNALSGVEPFRFNAVLCNPPFHQQHALTDNVAWEMFHHARRCLKINSELYIVANRHLDYFHKLKKIFGNCTTIATNNKFVVLKAVKLGRRR</sequence>
<accession>B2U1T3</accession>
<name>RLMG_SHIB3</name>
<comment type="function">
    <text evidence="1">Specifically methylates the guanine in position 1835 (m2G1835) of 23S rRNA.</text>
</comment>
<comment type="catalytic activity">
    <reaction evidence="1">
        <text>guanosine(1835) in 23S rRNA + S-adenosyl-L-methionine = N(2)-methylguanosine(1835) in 23S rRNA + S-adenosyl-L-homocysteine + H(+)</text>
        <dbReference type="Rhea" id="RHEA:42744"/>
        <dbReference type="Rhea" id="RHEA-COMP:10217"/>
        <dbReference type="Rhea" id="RHEA-COMP:10218"/>
        <dbReference type="ChEBI" id="CHEBI:15378"/>
        <dbReference type="ChEBI" id="CHEBI:57856"/>
        <dbReference type="ChEBI" id="CHEBI:59789"/>
        <dbReference type="ChEBI" id="CHEBI:74269"/>
        <dbReference type="ChEBI" id="CHEBI:74481"/>
        <dbReference type="EC" id="2.1.1.174"/>
    </reaction>
</comment>
<comment type="subcellular location">
    <subcellularLocation>
        <location evidence="1">Cytoplasm</location>
    </subcellularLocation>
</comment>
<comment type="similarity">
    <text evidence="1">Belongs to the methyltransferase superfamily. RlmG family.</text>
</comment>
<proteinExistence type="inferred from homology"/>